<dbReference type="EC" id="2.3.1.234" evidence="1"/>
<dbReference type="EMBL" id="AE008917">
    <property type="protein sequence ID" value="AAL51357.1"/>
    <property type="molecule type" value="Genomic_DNA"/>
</dbReference>
<dbReference type="PIR" id="AB3274">
    <property type="entry name" value="AB3274"/>
</dbReference>
<dbReference type="RefSeq" id="WP_002964958.1">
    <property type="nucleotide sequence ID" value="NZ_GG703778.1"/>
</dbReference>
<dbReference type="SMR" id="Q8YJB1"/>
<dbReference type="GeneID" id="97534824"/>
<dbReference type="KEGG" id="bme:BMEI0175"/>
<dbReference type="KEGG" id="bmel:DK63_1261"/>
<dbReference type="PATRIC" id="fig|224914.52.peg.1329"/>
<dbReference type="eggNOG" id="COG0533">
    <property type="taxonomic scope" value="Bacteria"/>
</dbReference>
<dbReference type="PhylomeDB" id="Q8YJB1"/>
<dbReference type="Proteomes" id="UP000000419">
    <property type="component" value="Chromosome I"/>
</dbReference>
<dbReference type="GO" id="GO:0005737">
    <property type="term" value="C:cytoplasm"/>
    <property type="evidence" value="ECO:0007669"/>
    <property type="project" value="UniProtKB-SubCell"/>
</dbReference>
<dbReference type="GO" id="GO:0005506">
    <property type="term" value="F:iron ion binding"/>
    <property type="evidence" value="ECO:0007669"/>
    <property type="project" value="UniProtKB-UniRule"/>
</dbReference>
<dbReference type="GO" id="GO:0061711">
    <property type="term" value="F:N(6)-L-threonylcarbamoyladenine synthase activity"/>
    <property type="evidence" value="ECO:0007669"/>
    <property type="project" value="UniProtKB-EC"/>
</dbReference>
<dbReference type="GO" id="GO:0002949">
    <property type="term" value="P:tRNA threonylcarbamoyladenosine modification"/>
    <property type="evidence" value="ECO:0007669"/>
    <property type="project" value="UniProtKB-UniRule"/>
</dbReference>
<dbReference type="CDD" id="cd24133">
    <property type="entry name" value="ASKHA_NBD_TsaD_bac"/>
    <property type="match status" value="1"/>
</dbReference>
<dbReference type="FunFam" id="3.30.420.40:FF:000040">
    <property type="entry name" value="tRNA N6-adenosine threonylcarbamoyltransferase"/>
    <property type="match status" value="1"/>
</dbReference>
<dbReference type="Gene3D" id="3.30.420.40">
    <property type="match status" value="2"/>
</dbReference>
<dbReference type="HAMAP" id="MF_01445">
    <property type="entry name" value="TsaD"/>
    <property type="match status" value="1"/>
</dbReference>
<dbReference type="InterPro" id="IPR043129">
    <property type="entry name" value="ATPase_NBD"/>
</dbReference>
<dbReference type="InterPro" id="IPR000905">
    <property type="entry name" value="Gcp-like_dom"/>
</dbReference>
<dbReference type="InterPro" id="IPR017861">
    <property type="entry name" value="KAE1/TsaD"/>
</dbReference>
<dbReference type="InterPro" id="IPR022450">
    <property type="entry name" value="TsaD"/>
</dbReference>
<dbReference type="NCBIfam" id="TIGR00329">
    <property type="entry name" value="gcp_kae1"/>
    <property type="match status" value="1"/>
</dbReference>
<dbReference type="NCBIfam" id="TIGR03723">
    <property type="entry name" value="T6A_TsaD_YgjD"/>
    <property type="match status" value="1"/>
</dbReference>
<dbReference type="PANTHER" id="PTHR11735">
    <property type="entry name" value="TRNA N6-ADENOSINE THREONYLCARBAMOYLTRANSFERASE"/>
    <property type="match status" value="1"/>
</dbReference>
<dbReference type="PANTHER" id="PTHR11735:SF6">
    <property type="entry name" value="TRNA N6-ADENOSINE THREONYLCARBAMOYLTRANSFERASE, MITOCHONDRIAL"/>
    <property type="match status" value="1"/>
</dbReference>
<dbReference type="Pfam" id="PF00814">
    <property type="entry name" value="TsaD"/>
    <property type="match status" value="1"/>
</dbReference>
<dbReference type="PRINTS" id="PR00789">
    <property type="entry name" value="OSIALOPTASE"/>
</dbReference>
<dbReference type="SUPFAM" id="SSF53067">
    <property type="entry name" value="Actin-like ATPase domain"/>
    <property type="match status" value="2"/>
</dbReference>
<comment type="function">
    <text evidence="1">Required for the formation of a threonylcarbamoyl group on adenosine at position 37 (t(6)A37) in tRNAs that read codons beginning with adenine. Is involved in the transfer of the threonylcarbamoyl moiety of threonylcarbamoyl-AMP (TC-AMP) to the N6 group of A37, together with TsaE and TsaB. TsaD likely plays a direct catalytic role in this reaction.</text>
</comment>
<comment type="catalytic activity">
    <reaction evidence="1">
        <text>L-threonylcarbamoyladenylate + adenosine(37) in tRNA = N(6)-L-threonylcarbamoyladenosine(37) in tRNA + AMP + H(+)</text>
        <dbReference type="Rhea" id="RHEA:37059"/>
        <dbReference type="Rhea" id="RHEA-COMP:10162"/>
        <dbReference type="Rhea" id="RHEA-COMP:10163"/>
        <dbReference type="ChEBI" id="CHEBI:15378"/>
        <dbReference type="ChEBI" id="CHEBI:73682"/>
        <dbReference type="ChEBI" id="CHEBI:74411"/>
        <dbReference type="ChEBI" id="CHEBI:74418"/>
        <dbReference type="ChEBI" id="CHEBI:456215"/>
        <dbReference type="EC" id="2.3.1.234"/>
    </reaction>
</comment>
<comment type="cofactor">
    <cofactor evidence="1">
        <name>Fe(2+)</name>
        <dbReference type="ChEBI" id="CHEBI:29033"/>
    </cofactor>
    <text evidence="1">Binds 1 Fe(2+) ion per subunit.</text>
</comment>
<comment type="subcellular location">
    <subcellularLocation>
        <location evidence="1">Cytoplasm</location>
    </subcellularLocation>
</comment>
<comment type="similarity">
    <text evidence="1">Belongs to the KAE1 / TsaD family.</text>
</comment>
<proteinExistence type="inferred from homology"/>
<name>TSAD_BRUME</name>
<sequence length="359" mass="37982">MRVLGIETSCDETAAAIVERDDMGEGRILSNVVLSQIAEHEPYGGVVPEIAARAHVEALDRLVDRALNDAGLKLYEVDAVAATAGPGLIGGLIVGLMTAKALAMAAQKPFYAVNHLEGHALTARLTDGLPFPYLLLLVSGGHTQMVLVRGIGDYERLGTTIDDALGEAFDKTAKLLGLPYPGGPAVERMALQGDQKRFALPRPLKGEARLDFSFSGLKTAVRQTATELVPLTDQDVTDICASFQAAVADTLSDRVGRSLERFKTEFPDCATPSLVVAGGVAANKTLRAALENLCTRHGFAFIAPPLNLCTDNAAMIAWAGAERAATQAPDSLDIAPRSRWPLDEKSAPVFGTGRRGAKA</sequence>
<keyword id="KW-0012">Acyltransferase</keyword>
<keyword id="KW-0963">Cytoplasm</keyword>
<keyword id="KW-0408">Iron</keyword>
<keyword id="KW-0479">Metal-binding</keyword>
<keyword id="KW-0808">Transferase</keyword>
<keyword id="KW-0819">tRNA processing</keyword>
<accession>Q8YJB1</accession>
<feature type="chain" id="PRO_0000303295" description="tRNA N6-adenosine threonylcarbamoyltransferase">
    <location>
        <begin position="1"/>
        <end position="359"/>
    </location>
</feature>
<feature type="region of interest" description="Disordered" evidence="2">
    <location>
        <begin position="328"/>
        <end position="359"/>
    </location>
</feature>
<feature type="binding site" evidence="1">
    <location>
        <position position="115"/>
    </location>
    <ligand>
        <name>Fe cation</name>
        <dbReference type="ChEBI" id="CHEBI:24875"/>
    </ligand>
</feature>
<feature type="binding site" evidence="1">
    <location>
        <position position="119"/>
    </location>
    <ligand>
        <name>Fe cation</name>
        <dbReference type="ChEBI" id="CHEBI:24875"/>
    </ligand>
</feature>
<feature type="binding site" evidence="1">
    <location>
        <begin position="137"/>
        <end position="141"/>
    </location>
    <ligand>
        <name>substrate</name>
    </ligand>
</feature>
<feature type="binding site" evidence="1">
    <location>
        <position position="170"/>
    </location>
    <ligand>
        <name>substrate</name>
    </ligand>
</feature>
<feature type="binding site" evidence="1">
    <location>
        <position position="183"/>
    </location>
    <ligand>
        <name>substrate</name>
    </ligand>
</feature>
<feature type="binding site" evidence="1">
    <location>
        <position position="283"/>
    </location>
    <ligand>
        <name>substrate</name>
    </ligand>
</feature>
<feature type="binding site" evidence="1">
    <location>
        <position position="311"/>
    </location>
    <ligand>
        <name>Fe cation</name>
        <dbReference type="ChEBI" id="CHEBI:24875"/>
    </ligand>
</feature>
<evidence type="ECO:0000255" key="1">
    <source>
        <dbReference type="HAMAP-Rule" id="MF_01445"/>
    </source>
</evidence>
<evidence type="ECO:0000256" key="2">
    <source>
        <dbReference type="SAM" id="MobiDB-lite"/>
    </source>
</evidence>
<reference key="1">
    <citation type="journal article" date="2002" name="Proc. Natl. Acad. Sci. U.S.A.">
        <title>The genome sequence of the facultative intracellular pathogen Brucella melitensis.</title>
        <authorList>
            <person name="DelVecchio V.G."/>
            <person name="Kapatral V."/>
            <person name="Redkar R.J."/>
            <person name="Patra G."/>
            <person name="Mujer C."/>
            <person name="Los T."/>
            <person name="Ivanova N."/>
            <person name="Anderson I."/>
            <person name="Bhattacharyya A."/>
            <person name="Lykidis A."/>
            <person name="Reznik G."/>
            <person name="Jablonski L."/>
            <person name="Larsen N."/>
            <person name="D'Souza M."/>
            <person name="Bernal A."/>
            <person name="Mazur M."/>
            <person name="Goltsman E."/>
            <person name="Selkov E."/>
            <person name="Elzer P.H."/>
            <person name="Hagius S."/>
            <person name="O'Callaghan D."/>
            <person name="Letesson J.-J."/>
            <person name="Haselkorn R."/>
            <person name="Kyrpides N.C."/>
            <person name="Overbeek R."/>
        </authorList>
    </citation>
    <scope>NUCLEOTIDE SEQUENCE [LARGE SCALE GENOMIC DNA]</scope>
    <source>
        <strain>ATCC 23456 / CCUG 17765 / NCTC 10094 / 16M</strain>
    </source>
</reference>
<protein>
    <recommendedName>
        <fullName evidence="1">tRNA N6-adenosine threonylcarbamoyltransferase</fullName>
        <ecNumber evidence="1">2.3.1.234</ecNumber>
    </recommendedName>
    <alternativeName>
        <fullName evidence="1">N6-L-threonylcarbamoyladenine synthase</fullName>
        <shortName evidence="1">t(6)A synthase</shortName>
    </alternativeName>
    <alternativeName>
        <fullName evidence="1">t(6)A37 threonylcarbamoyladenosine biosynthesis protein TsaD</fullName>
    </alternativeName>
    <alternativeName>
        <fullName evidence="1">tRNA threonylcarbamoyladenosine biosynthesis protein TsaD</fullName>
    </alternativeName>
</protein>
<organism>
    <name type="scientific">Brucella melitensis biotype 1 (strain ATCC 23456 / CCUG 17765 / NCTC 10094 / 16M)</name>
    <dbReference type="NCBI Taxonomy" id="224914"/>
    <lineage>
        <taxon>Bacteria</taxon>
        <taxon>Pseudomonadati</taxon>
        <taxon>Pseudomonadota</taxon>
        <taxon>Alphaproteobacteria</taxon>
        <taxon>Hyphomicrobiales</taxon>
        <taxon>Brucellaceae</taxon>
        <taxon>Brucella/Ochrobactrum group</taxon>
        <taxon>Brucella</taxon>
    </lineage>
</organism>
<gene>
    <name evidence="1" type="primary">tsaD</name>
    <name type="synonym">gcp</name>
    <name type="ordered locus">BMEI0175</name>
</gene>